<gene>
    <name type="primary">pcid2</name>
    <name type="ORF">zgc:101845</name>
</gene>
<proteinExistence type="evidence at transcript level"/>
<evidence type="ECO:0000255" key="1">
    <source>
        <dbReference type="PROSITE-ProRule" id="PRU01185"/>
    </source>
</evidence>
<evidence type="ECO:0000305" key="2"/>
<comment type="similarity">
    <text evidence="2">Belongs to the CSN12 family.</text>
</comment>
<keyword id="KW-1185">Reference proteome</keyword>
<reference key="1">
    <citation type="submission" date="2004-11" db="EMBL/GenBank/DDBJ databases">
        <authorList>
            <consortium name="NIH - Zebrafish Gene Collection (ZGC) project"/>
        </authorList>
    </citation>
    <scope>NUCLEOTIDE SEQUENCE [LARGE SCALE MRNA]</scope>
    <source>
        <tissue>Larva</tissue>
    </source>
</reference>
<protein>
    <recommendedName>
        <fullName>PCI domain-containing protein 2</fullName>
    </recommendedName>
    <alternativeName>
        <fullName>CSN12-like protein</fullName>
    </alternativeName>
</protein>
<dbReference type="EMBL" id="BC085454">
    <property type="protein sequence ID" value="AAH85454.1"/>
    <property type="molecule type" value="mRNA"/>
</dbReference>
<dbReference type="RefSeq" id="NP_001007382.1">
    <property type="nucleotide sequence ID" value="NM_001007381.2"/>
</dbReference>
<dbReference type="SMR" id="Q5U3P0"/>
<dbReference type="FunCoup" id="Q5U3P0">
    <property type="interactions" value="2352"/>
</dbReference>
<dbReference type="STRING" id="7955.ENSDARP00000009441"/>
<dbReference type="PaxDb" id="7955-ENSDARP00000009441"/>
<dbReference type="GeneID" id="492509"/>
<dbReference type="KEGG" id="dre:492509"/>
<dbReference type="AGR" id="ZFIN:ZDB-GENE-041114-79"/>
<dbReference type="CTD" id="55795"/>
<dbReference type="ZFIN" id="ZDB-GENE-041114-79">
    <property type="gene designation" value="pcid2"/>
</dbReference>
<dbReference type="eggNOG" id="KOG2688">
    <property type="taxonomic scope" value="Eukaryota"/>
</dbReference>
<dbReference type="InParanoid" id="Q5U3P0"/>
<dbReference type="OrthoDB" id="10252687at2759"/>
<dbReference type="PhylomeDB" id="Q5U3P0"/>
<dbReference type="PRO" id="PR:Q5U3P0"/>
<dbReference type="Proteomes" id="UP000000437">
    <property type="component" value="Chromosome 1"/>
</dbReference>
<dbReference type="GO" id="GO:0070390">
    <property type="term" value="C:transcription export complex 2"/>
    <property type="evidence" value="ECO:0000318"/>
    <property type="project" value="GO_Central"/>
</dbReference>
<dbReference type="GO" id="GO:0003690">
    <property type="term" value="F:double-stranded DNA binding"/>
    <property type="evidence" value="ECO:0000318"/>
    <property type="project" value="GO_Central"/>
</dbReference>
<dbReference type="GO" id="GO:0003723">
    <property type="term" value="F:RNA binding"/>
    <property type="evidence" value="ECO:0000318"/>
    <property type="project" value="GO_Central"/>
</dbReference>
<dbReference type="GO" id="GO:0016973">
    <property type="term" value="P:poly(A)+ mRNA export from nucleus"/>
    <property type="evidence" value="ECO:0000318"/>
    <property type="project" value="GO_Central"/>
</dbReference>
<dbReference type="GO" id="GO:0000973">
    <property type="term" value="P:post-transcriptional tethering of RNA polymerase II gene DNA at nuclear periphery"/>
    <property type="evidence" value="ECO:0000318"/>
    <property type="project" value="GO_Central"/>
</dbReference>
<dbReference type="GO" id="GO:0006368">
    <property type="term" value="P:transcription elongation by RNA polymerase II"/>
    <property type="evidence" value="ECO:0000318"/>
    <property type="project" value="GO_Central"/>
</dbReference>
<dbReference type="FunFam" id="1.10.10.10:FF:000146">
    <property type="entry name" value="PCI domain-containing protein 2 homolog"/>
    <property type="match status" value="1"/>
</dbReference>
<dbReference type="Gene3D" id="1.10.10.10">
    <property type="entry name" value="Winged helix-like DNA-binding domain superfamily/Winged helix DNA-binding domain"/>
    <property type="match status" value="1"/>
</dbReference>
<dbReference type="InterPro" id="IPR045114">
    <property type="entry name" value="Csn12-like"/>
</dbReference>
<dbReference type="InterPro" id="IPR000717">
    <property type="entry name" value="PCI_dom"/>
</dbReference>
<dbReference type="InterPro" id="IPR036388">
    <property type="entry name" value="WH-like_DNA-bd_sf"/>
</dbReference>
<dbReference type="PANTHER" id="PTHR12732:SF0">
    <property type="entry name" value="PCI DOMAIN-CONTAINING PROTEIN 2"/>
    <property type="match status" value="1"/>
</dbReference>
<dbReference type="PANTHER" id="PTHR12732">
    <property type="entry name" value="UNCHARACTERIZED PROTEASOME COMPONENT REGION PCI-CONTAINING"/>
    <property type="match status" value="1"/>
</dbReference>
<dbReference type="Pfam" id="PF01399">
    <property type="entry name" value="PCI"/>
    <property type="match status" value="1"/>
</dbReference>
<dbReference type="SMART" id="SM00753">
    <property type="entry name" value="PAM"/>
    <property type="match status" value="1"/>
</dbReference>
<dbReference type="PROSITE" id="PS50250">
    <property type="entry name" value="PCI"/>
    <property type="match status" value="1"/>
</dbReference>
<organism>
    <name type="scientific">Danio rerio</name>
    <name type="common">Zebrafish</name>
    <name type="synonym">Brachydanio rerio</name>
    <dbReference type="NCBI Taxonomy" id="7955"/>
    <lineage>
        <taxon>Eukaryota</taxon>
        <taxon>Metazoa</taxon>
        <taxon>Chordata</taxon>
        <taxon>Craniata</taxon>
        <taxon>Vertebrata</taxon>
        <taxon>Euteleostomi</taxon>
        <taxon>Actinopterygii</taxon>
        <taxon>Neopterygii</taxon>
        <taxon>Teleostei</taxon>
        <taxon>Ostariophysi</taxon>
        <taxon>Cypriniformes</taxon>
        <taxon>Danionidae</taxon>
        <taxon>Danioninae</taxon>
        <taxon>Danio</taxon>
    </lineage>
</organism>
<feature type="chain" id="PRO_0000121031" description="PCI domain-containing protein 2">
    <location>
        <begin position="1"/>
        <end position="399"/>
    </location>
</feature>
<feature type="domain" description="PCI" evidence="1">
    <location>
        <begin position="210"/>
        <end position="391"/>
    </location>
</feature>
<name>PCID2_DANRE</name>
<sequence>MAHITLNQYLQQVLEAIDSRDGSFCAEMMSFKHPHVANPRLQLSSPEEKCQQLLEPPYDEMVAAHLRCTFAVSNHDFVEAYKCQTVVVQSFLKAFQAHKEENWALPIMFAVTLDLRIFANNAEQHLQQKGKGKVGDMLEKAAEQLMSCFRVCASDNRAGIDDSKKWGMLFLINQLFKIYFKINKLHLCKPLIRAIDSSNLKDEYTMAQRVTYKYYVGRKAMFDSDFKPAEECLSFSFTHCHRSCQRNKRLILIYLLPVKMLLGHMPTHQLLKKYDLMQFADVTRAVSEGNLLLLNAALVKHETFFIRCGIFLILEKLKIITYRNLFKKVYHLLRTHQLPLAAFLVSLQMTKVEDVDIDEVQCILANLIYMGHIKGYISHQHQKLVVSKQNPFPPLSSIS</sequence>
<accession>Q5U3P0</accession>